<accession>Q88N56</accession>
<feature type="chain" id="PRO_0000174807" description="Co-chaperonin GroES">
    <location>
        <begin position="1"/>
        <end position="97"/>
    </location>
</feature>
<keyword id="KW-0143">Chaperone</keyword>
<keyword id="KW-0963">Cytoplasm</keyword>
<keyword id="KW-1185">Reference proteome</keyword>
<sequence>MKLRPLHDRVVIRRSEEESKTAGGIVLPGSAAEKPNRGEVVAVGTGRVLDNGEVRALAVKVGDKVVFGPYSGSNTVKVDGEDLLVMAENEILAVVEG</sequence>
<gene>
    <name evidence="1" type="primary">groES</name>
    <name evidence="1" type="synonym">groS</name>
    <name type="ordered locus">PP_1360</name>
</gene>
<proteinExistence type="inferred from homology"/>
<dbReference type="EMBL" id="AE015451">
    <property type="protein sequence ID" value="AAN66983.1"/>
    <property type="molecule type" value="Genomic_DNA"/>
</dbReference>
<dbReference type="RefSeq" id="NP_743519.1">
    <property type="nucleotide sequence ID" value="NC_002947.4"/>
</dbReference>
<dbReference type="RefSeq" id="WP_003251905.1">
    <property type="nucleotide sequence ID" value="NZ_CP169744.1"/>
</dbReference>
<dbReference type="SMR" id="Q88N56"/>
<dbReference type="STRING" id="160488.PP_1360"/>
<dbReference type="PaxDb" id="160488-PP_1360"/>
<dbReference type="KEGG" id="ppu:PP_1360"/>
<dbReference type="PATRIC" id="fig|160488.4.peg.1441"/>
<dbReference type="eggNOG" id="COG0234">
    <property type="taxonomic scope" value="Bacteria"/>
</dbReference>
<dbReference type="HOGENOM" id="CLU_132825_2_0_6"/>
<dbReference type="OrthoDB" id="9806791at2"/>
<dbReference type="PhylomeDB" id="Q88N56"/>
<dbReference type="BioCyc" id="PPUT160488:G1G01-1449-MONOMER"/>
<dbReference type="Proteomes" id="UP000000556">
    <property type="component" value="Chromosome"/>
</dbReference>
<dbReference type="GO" id="GO:0005737">
    <property type="term" value="C:cytoplasm"/>
    <property type="evidence" value="ECO:0007669"/>
    <property type="project" value="UniProtKB-SubCell"/>
</dbReference>
<dbReference type="GO" id="GO:0005524">
    <property type="term" value="F:ATP binding"/>
    <property type="evidence" value="ECO:0007669"/>
    <property type="project" value="InterPro"/>
</dbReference>
<dbReference type="GO" id="GO:0046872">
    <property type="term" value="F:metal ion binding"/>
    <property type="evidence" value="ECO:0007669"/>
    <property type="project" value="TreeGrafter"/>
</dbReference>
<dbReference type="GO" id="GO:0044183">
    <property type="term" value="F:protein folding chaperone"/>
    <property type="evidence" value="ECO:0007669"/>
    <property type="project" value="InterPro"/>
</dbReference>
<dbReference type="GO" id="GO:0051087">
    <property type="term" value="F:protein-folding chaperone binding"/>
    <property type="evidence" value="ECO:0007669"/>
    <property type="project" value="TreeGrafter"/>
</dbReference>
<dbReference type="GO" id="GO:0051082">
    <property type="term" value="F:unfolded protein binding"/>
    <property type="evidence" value="ECO:0007669"/>
    <property type="project" value="TreeGrafter"/>
</dbReference>
<dbReference type="GO" id="GO:0051085">
    <property type="term" value="P:chaperone cofactor-dependent protein refolding"/>
    <property type="evidence" value="ECO:0007669"/>
    <property type="project" value="TreeGrafter"/>
</dbReference>
<dbReference type="CDD" id="cd00320">
    <property type="entry name" value="cpn10"/>
    <property type="match status" value="1"/>
</dbReference>
<dbReference type="FunFam" id="2.30.33.40:FF:000001">
    <property type="entry name" value="10 kDa chaperonin"/>
    <property type="match status" value="1"/>
</dbReference>
<dbReference type="Gene3D" id="2.30.33.40">
    <property type="entry name" value="GroES chaperonin"/>
    <property type="match status" value="1"/>
</dbReference>
<dbReference type="HAMAP" id="MF_00580">
    <property type="entry name" value="CH10"/>
    <property type="match status" value="1"/>
</dbReference>
<dbReference type="InterPro" id="IPR020818">
    <property type="entry name" value="Chaperonin_GroES"/>
</dbReference>
<dbReference type="InterPro" id="IPR037124">
    <property type="entry name" value="Chaperonin_GroES_sf"/>
</dbReference>
<dbReference type="InterPro" id="IPR018369">
    <property type="entry name" value="Chaprnonin_Cpn10_CS"/>
</dbReference>
<dbReference type="InterPro" id="IPR011032">
    <property type="entry name" value="GroES-like_sf"/>
</dbReference>
<dbReference type="NCBIfam" id="NF001526">
    <property type="entry name" value="PRK00364.1-1"/>
    <property type="match status" value="1"/>
</dbReference>
<dbReference type="NCBIfam" id="NF001527">
    <property type="entry name" value="PRK00364.1-2"/>
    <property type="match status" value="1"/>
</dbReference>
<dbReference type="NCBIfam" id="NF001531">
    <property type="entry name" value="PRK00364.2-2"/>
    <property type="match status" value="1"/>
</dbReference>
<dbReference type="NCBIfam" id="NF001533">
    <property type="entry name" value="PRK00364.2-4"/>
    <property type="match status" value="1"/>
</dbReference>
<dbReference type="PANTHER" id="PTHR10772">
    <property type="entry name" value="10 KDA HEAT SHOCK PROTEIN"/>
    <property type="match status" value="1"/>
</dbReference>
<dbReference type="PANTHER" id="PTHR10772:SF58">
    <property type="entry name" value="CO-CHAPERONIN GROES"/>
    <property type="match status" value="1"/>
</dbReference>
<dbReference type="Pfam" id="PF00166">
    <property type="entry name" value="Cpn10"/>
    <property type="match status" value="1"/>
</dbReference>
<dbReference type="PRINTS" id="PR00297">
    <property type="entry name" value="CHAPERONIN10"/>
</dbReference>
<dbReference type="SMART" id="SM00883">
    <property type="entry name" value="Cpn10"/>
    <property type="match status" value="1"/>
</dbReference>
<dbReference type="SUPFAM" id="SSF50129">
    <property type="entry name" value="GroES-like"/>
    <property type="match status" value="1"/>
</dbReference>
<dbReference type="PROSITE" id="PS00681">
    <property type="entry name" value="CHAPERONINS_CPN10"/>
    <property type="match status" value="1"/>
</dbReference>
<name>CH10_PSEPK</name>
<evidence type="ECO:0000255" key="1">
    <source>
        <dbReference type="HAMAP-Rule" id="MF_00580"/>
    </source>
</evidence>
<protein>
    <recommendedName>
        <fullName evidence="1">Co-chaperonin GroES</fullName>
    </recommendedName>
    <alternativeName>
        <fullName evidence="1">10 kDa chaperonin</fullName>
    </alternativeName>
    <alternativeName>
        <fullName evidence="1">Chaperonin-10</fullName>
        <shortName evidence="1">Cpn10</shortName>
    </alternativeName>
</protein>
<comment type="function">
    <text evidence="1">Together with the chaperonin GroEL, plays an essential role in assisting protein folding. The GroEL-GroES system forms a nano-cage that allows encapsulation of the non-native substrate proteins and provides a physical environment optimized to promote and accelerate protein folding. GroES binds to the apical surface of the GroEL ring, thereby capping the opening of the GroEL channel.</text>
</comment>
<comment type="subunit">
    <text evidence="1">Heptamer of 7 subunits arranged in a ring. Interacts with the chaperonin GroEL.</text>
</comment>
<comment type="subcellular location">
    <subcellularLocation>
        <location evidence="1">Cytoplasm</location>
    </subcellularLocation>
</comment>
<comment type="similarity">
    <text evidence="1">Belongs to the GroES chaperonin family.</text>
</comment>
<reference key="1">
    <citation type="journal article" date="2002" name="Environ. Microbiol.">
        <title>Complete genome sequence and comparative analysis of the metabolically versatile Pseudomonas putida KT2440.</title>
        <authorList>
            <person name="Nelson K.E."/>
            <person name="Weinel C."/>
            <person name="Paulsen I.T."/>
            <person name="Dodson R.J."/>
            <person name="Hilbert H."/>
            <person name="Martins dos Santos V.A.P."/>
            <person name="Fouts D.E."/>
            <person name="Gill S.R."/>
            <person name="Pop M."/>
            <person name="Holmes M."/>
            <person name="Brinkac L.M."/>
            <person name="Beanan M.J."/>
            <person name="DeBoy R.T."/>
            <person name="Daugherty S.C."/>
            <person name="Kolonay J.F."/>
            <person name="Madupu R."/>
            <person name="Nelson W.C."/>
            <person name="White O."/>
            <person name="Peterson J.D."/>
            <person name="Khouri H.M."/>
            <person name="Hance I."/>
            <person name="Chris Lee P."/>
            <person name="Holtzapple E.K."/>
            <person name="Scanlan D."/>
            <person name="Tran K."/>
            <person name="Moazzez A."/>
            <person name="Utterback T.R."/>
            <person name="Rizzo M."/>
            <person name="Lee K."/>
            <person name="Kosack D."/>
            <person name="Moestl D."/>
            <person name="Wedler H."/>
            <person name="Lauber J."/>
            <person name="Stjepandic D."/>
            <person name="Hoheisel J."/>
            <person name="Straetz M."/>
            <person name="Heim S."/>
            <person name="Kiewitz C."/>
            <person name="Eisen J.A."/>
            <person name="Timmis K.N."/>
            <person name="Duesterhoeft A."/>
            <person name="Tuemmler B."/>
            <person name="Fraser C.M."/>
        </authorList>
    </citation>
    <scope>NUCLEOTIDE SEQUENCE [LARGE SCALE GENOMIC DNA]</scope>
    <source>
        <strain>ATCC 47054 / DSM 6125 / CFBP 8728 / NCIMB 11950 / KT2440</strain>
    </source>
</reference>
<organism>
    <name type="scientific">Pseudomonas putida (strain ATCC 47054 / DSM 6125 / CFBP 8728 / NCIMB 11950 / KT2440)</name>
    <dbReference type="NCBI Taxonomy" id="160488"/>
    <lineage>
        <taxon>Bacteria</taxon>
        <taxon>Pseudomonadati</taxon>
        <taxon>Pseudomonadota</taxon>
        <taxon>Gammaproteobacteria</taxon>
        <taxon>Pseudomonadales</taxon>
        <taxon>Pseudomonadaceae</taxon>
        <taxon>Pseudomonas</taxon>
    </lineage>
</organism>